<proteinExistence type="evidence at protein level"/>
<feature type="chain" id="PRO_0000341420" description="Inactive histone-lysine N-methyltransferase 2E">
    <location>
        <begin position="1"/>
        <end position="1868"/>
    </location>
</feature>
<feature type="domain" description="SET" evidence="4">
    <location>
        <begin position="330"/>
        <end position="447"/>
    </location>
</feature>
<feature type="zinc finger region" description="PHD-type" evidence="3">
    <location>
        <begin position="118"/>
        <end position="166"/>
    </location>
</feature>
<feature type="region of interest" description="Disordered" evidence="5">
    <location>
        <begin position="178"/>
        <end position="197"/>
    </location>
</feature>
<feature type="region of interest" description="Disordered" evidence="5">
    <location>
        <begin position="217"/>
        <end position="268"/>
    </location>
</feature>
<feature type="region of interest" description="Disordered" evidence="5">
    <location>
        <begin position="308"/>
        <end position="329"/>
    </location>
</feature>
<feature type="region of interest" description="Disordered" evidence="5">
    <location>
        <begin position="472"/>
        <end position="504"/>
    </location>
</feature>
<feature type="region of interest" description="Disordered" evidence="5">
    <location>
        <begin position="646"/>
        <end position="682"/>
    </location>
</feature>
<feature type="region of interest" description="Disordered" evidence="5">
    <location>
        <begin position="884"/>
        <end position="924"/>
    </location>
</feature>
<feature type="region of interest" description="Disordered" evidence="5">
    <location>
        <begin position="1038"/>
        <end position="1068"/>
    </location>
</feature>
<feature type="region of interest" description="Disordered" evidence="5">
    <location>
        <begin position="1165"/>
        <end position="1222"/>
    </location>
</feature>
<feature type="region of interest" description="Disordered" evidence="5">
    <location>
        <begin position="1236"/>
        <end position="1315"/>
    </location>
</feature>
<feature type="region of interest" description="Disordered" evidence="5">
    <location>
        <begin position="1334"/>
        <end position="1565"/>
    </location>
</feature>
<feature type="region of interest" description="Disordered" evidence="5">
    <location>
        <begin position="1585"/>
        <end position="1842"/>
    </location>
</feature>
<feature type="coiled-coil region" evidence="2">
    <location>
        <begin position="559"/>
        <end position="613"/>
    </location>
</feature>
<feature type="short sequence motif" description="HCFC1-binding motif (HBM)" evidence="1">
    <location>
        <begin position="63"/>
        <end position="66"/>
    </location>
</feature>
<feature type="compositionally biased region" description="Basic and acidic residues" evidence="5">
    <location>
        <begin position="494"/>
        <end position="504"/>
    </location>
</feature>
<feature type="compositionally biased region" description="Basic residues" evidence="5">
    <location>
        <begin position="646"/>
        <end position="670"/>
    </location>
</feature>
<feature type="compositionally biased region" description="Low complexity" evidence="5">
    <location>
        <begin position="884"/>
        <end position="908"/>
    </location>
</feature>
<feature type="compositionally biased region" description="Polar residues" evidence="5">
    <location>
        <begin position="1049"/>
        <end position="1068"/>
    </location>
</feature>
<feature type="compositionally biased region" description="Low complexity" evidence="5">
    <location>
        <begin position="1184"/>
        <end position="1197"/>
    </location>
</feature>
<feature type="compositionally biased region" description="Polar residues" evidence="5">
    <location>
        <begin position="1203"/>
        <end position="1213"/>
    </location>
</feature>
<feature type="compositionally biased region" description="Basic and acidic residues" evidence="5">
    <location>
        <begin position="1282"/>
        <end position="1291"/>
    </location>
</feature>
<feature type="compositionally biased region" description="Low complexity" evidence="5">
    <location>
        <begin position="1294"/>
        <end position="1312"/>
    </location>
</feature>
<feature type="compositionally biased region" description="Low complexity" evidence="5">
    <location>
        <begin position="1348"/>
        <end position="1363"/>
    </location>
</feature>
<feature type="compositionally biased region" description="Polar residues" evidence="5">
    <location>
        <begin position="1389"/>
        <end position="1421"/>
    </location>
</feature>
<feature type="compositionally biased region" description="Polar residues" evidence="5">
    <location>
        <begin position="1451"/>
        <end position="1463"/>
    </location>
</feature>
<feature type="compositionally biased region" description="Polar residues" evidence="5">
    <location>
        <begin position="1488"/>
        <end position="1498"/>
    </location>
</feature>
<feature type="compositionally biased region" description="Low complexity" evidence="5">
    <location>
        <begin position="1506"/>
        <end position="1518"/>
    </location>
</feature>
<feature type="compositionally biased region" description="Polar residues" evidence="5">
    <location>
        <begin position="1519"/>
        <end position="1547"/>
    </location>
</feature>
<feature type="compositionally biased region" description="Pro residues" evidence="5">
    <location>
        <begin position="1548"/>
        <end position="1558"/>
    </location>
</feature>
<feature type="compositionally biased region" description="Polar residues" evidence="5">
    <location>
        <begin position="1585"/>
        <end position="1603"/>
    </location>
</feature>
<feature type="compositionally biased region" description="Pro residues" evidence="5">
    <location>
        <begin position="1631"/>
        <end position="1642"/>
    </location>
</feature>
<feature type="compositionally biased region" description="Polar residues" evidence="5">
    <location>
        <begin position="1647"/>
        <end position="1656"/>
    </location>
</feature>
<feature type="compositionally biased region" description="Pro residues" evidence="5">
    <location>
        <begin position="1682"/>
        <end position="1692"/>
    </location>
</feature>
<feature type="compositionally biased region" description="Polar residues" evidence="5">
    <location>
        <begin position="1706"/>
        <end position="1716"/>
    </location>
</feature>
<feature type="compositionally biased region" description="Pro residues" evidence="5">
    <location>
        <begin position="1719"/>
        <end position="1732"/>
    </location>
</feature>
<feature type="compositionally biased region" description="Polar residues" evidence="5">
    <location>
        <begin position="1806"/>
        <end position="1816"/>
    </location>
</feature>
<feature type="binding site" evidence="1">
    <location>
        <position position="121"/>
    </location>
    <ligand>
        <name>Zn(2+)</name>
        <dbReference type="ChEBI" id="CHEBI:29105"/>
        <label>1</label>
    </ligand>
</feature>
<feature type="binding site" evidence="1">
    <location>
        <position position="123"/>
    </location>
    <ligand>
        <name>Zn(2+)</name>
        <dbReference type="ChEBI" id="CHEBI:29105"/>
        <label>1</label>
    </ligand>
</feature>
<feature type="binding site" evidence="1">
    <location>
        <position position="135"/>
    </location>
    <ligand>
        <name>Zn(2+)</name>
        <dbReference type="ChEBI" id="CHEBI:29105"/>
        <label>2</label>
    </ligand>
</feature>
<feature type="binding site" evidence="1">
    <location>
        <position position="138"/>
    </location>
    <ligand>
        <name>Zn(2+)</name>
        <dbReference type="ChEBI" id="CHEBI:29105"/>
        <label>2</label>
    </ligand>
</feature>
<feature type="binding site" evidence="1">
    <location>
        <position position="143"/>
    </location>
    <ligand>
        <name>Zn(2+)</name>
        <dbReference type="ChEBI" id="CHEBI:29105"/>
        <label>1</label>
    </ligand>
</feature>
<feature type="binding site" evidence="1">
    <location>
        <position position="146"/>
    </location>
    <ligand>
        <name>Zn(2+)</name>
        <dbReference type="ChEBI" id="CHEBI:29105"/>
        <label>1</label>
    </ligand>
</feature>
<feature type="binding site" evidence="1">
    <location>
        <position position="160"/>
    </location>
    <ligand>
        <name>Zn(2+)</name>
        <dbReference type="ChEBI" id="CHEBI:29105"/>
        <label>2</label>
    </ligand>
</feature>
<feature type="binding site" evidence="1">
    <location>
        <position position="163"/>
    </location>
    <ligand>
        <name>Zn(2+)</name>
        <dbReference type="ChEBI" id="CHEBI:29105"/>
        <label>2</label>
    </ligand>
</feature>
<feature type="modified residue" description="Phosphoserine" evidence="1">
    <location>
        <position position="837"/>
    </location>
</feature>
<feature type="modified residue" description="Phosphoserine" evidence="24">
    <location>
        <position position="845"/>
    </location>
</feature>
<feature type="modified residue" description="Phosphoserine" evidence="1">
    <location>
        <position position="1070"/>
    </location>
</feature>
<feature type="modified residue" description="Phosphoserine" evidence="1">
    <location>
        <position position="1282"/>
    </location>
</feature>
<feature type="modified residue" description="Phosphoserine" evidence="1">
    <location>
        <position position="1364"/>
    </location>
</feature>
<feature type="glycosylation site" description="O-linked (GlcNAc) serine" evidence="1">
    <location>
        <position position="435"/>
    </location>
</feature>
<feature type="glycosylation site" description="O-linked (GlcNAc) threonine" evidence="1">
    <location>
        <position position="440"/>
    </location>
</feature>
<feature type="splice variant" id="VSP_052813" description="In isoform 2." evidence="13 14">
    <location>
        <begin position="1"/>
        <end position="580"/>
    </location>
</feature>
<feature type="sequence conflict" description="In Ref. 2; BAE43262." evidence="15" ref="2">
    <original>A</original>
    <variation>S</variation>
    <location>
        <position position="62"/>
    </location>
</feature>
<feature type="sequence conflict" description="In Ref. 2; BAE28389." evidence="15" ref="2">
    <original>R</original>
    <variation>I</variation>
    <location>
        <position position="181"/>
    </location>
</feature>
<feature type="sequence conflict" description="In Ref. 2; BAE28389." evidence="15" ref="2">
    <original>E</original>
    <variation>G</variation>
    <location>
        <position position="320"/>
    </location>
</feature>
<feature type="sequence conflict" description="In Ref. 2; BAB25186." evidence="15" ref="2">
    <original>R</original>
    <variation>S</variation>
    <location>
        <position position="489"/>
    </location>
</feature>
<feature type="sequence conflict" description="In Ref. 2; BAC28936." evidence="15" ref="2">
    <original>D</original>
    <variation>Y</variation>
    <location>
        <position position="512"/>
    </location>
</feature>
<feature type="sequence conflict" description="In Ref. 2; BAE35839." evidence="15" ref="2">
    <original>E</original>
    <variation>G</variation>
    <location>
        <position position="550"/>
    </location>
</feature>
<feature type="sequence conflict" description="In Ref. 2; BAE28389." evidence="15" ref="2">
    <original>E</original>
    <variation>G</variation>
    <location>
        <position position="562"/>
    </location>
</feature>
<feature type="sequence conflict" description="In Ref. 2; BAC28936." evidence="15" ref="2">
    <original>S</original>
    <variation>R</variation>
    <location>
        <position position="1005"/>
    </location>
</feature>
<dbReference type="EMBL" id="AC122022">
    <property type="status" value="NOT_ANNOTATED_CDS"/>
    <property type="molecule type" value="Genomic_DNA"/>
</dbReference>
<dbReference type="EMBL" id="AK007682">
    <property type="protein sequence ID" value="BAB25186.1"/>
    <property type="status" value="ALT_INIT"/>
    <property type="molecule type" value="mRNA"/>
</dbReference>
<dbReference type="EMBL" id="AK021284">
    <property type="protein sequence ID" value="BAE43262.1"/>
    <property type="molecule type" value="mRNA"/>
</dbReference>
<dbReference type="EMBL" id="AK035078">
    <property type="protein sequence ID" value="BAC28936.2"/>
    <property type="status" value="ALT_INIT"/>
    <property type="molecule type" value="mRNA"/>
</dbReference>
<dbReference type="EMBL" id="AK148169">
    <property type="protein sequence ID" value="BAE28389.1"/>
    <property type="status" value="ALT_FRAME"/>
    <property type="molecule type" value="mRNA"/>
</dbReference>
<dbReference type="EMBL" id="AK160519">
    <property type="protein sequence ID" value="BAE35839.1"/>
    <property type="molecule type" value="mRNA"/>
</dbReference>
<dbReference type="EMBL" id="BC036286">
    <property type="protein sequence ID" value="AAH36286.1"/>
    <property type="status" value="ALT_SEQ"/>
    <property type="molecule type" value="mRNA"/>
</dbReference>
<dbReference type="EMBL" id="BC064079">
    <property type="protein sequence ID" value="AAH64079.1"/>
    <property type="status" value="ALT_SEQ"/>
    <property type="molecule type" value="mRNA"/>
</dbReference>
<dbReference type="EMBL" id="BC089356">
    <property type="protein sequence ID" value="AAH89356.1"/>
    <property type="status" value="ALT_SEQ"/>
    <property type="molecule type" value="mRNA"/>
</dbReference>
<dbReference type="EMBL" id="BC103801">
    <property type="protein sequence ID" value="AAI03802.1"/>
    <property type="status" value="ALT_SEQ"/>
    <property type="molecule type" value="mRNA"/>
</dbReference>
<dbReference type="CCDS" id="CCDS51430.1">
    <molecule id="Q3UG20-1"/>
</dbReference>
<dbReference type="RefSeq" id="NP_081260.1">
    <molecule id="Q3UG20-1"/>
    <property type="nucleotide sequence ID" value="NM_026984.2"/>
</dbReference>
<dbReference type="RefSeq" id="XP_006535868.1">
    <molecule id="Q3UG20-1"/>
    <property type="nucleotide sequence ID" value="XM_006535805.4"/>
</dbReference>
<dbReference type="RefSeq" id="XP_036021362.1">
    <molecule id="Q3UG20-2"/>
    <property type="nucleotide sequence ID" value="XM_036165469.1"/>
</dbReference>
<dbReference type="BMRB" id="Q3UG20"/>
<dbReference type="SMR" id="Q3UG20"/>
<dbReference type="BioGRID" id="213280">
    <property type="interactions" value="3"/>
</dbReference>
<dbReference type="FunCoup" id="Q3UG20">
    <property type="interactions" value="3640"/>
</dbReference>
<dbReference type="IntAct" id="Q3UG20">
    <property type="interactions" value="1"/>
</dbReference>
<dbReference type="STRING" id="10090.ENSMUSP00000110781"/>
<dbReference type="GlyCosmos" id="Q3UG20">
    <property type="glycosylation" value="2 sites, No reported glycans"/>
</dbReference>
<dbReference type="GlyGen" id="Q3UG20">
    <property type="glycosylation" value="14 sites, 1 N-linked glycan (1 site)"/>
</dbReference>
<dbReference type="iPTMnet" id="Q3UG20"/>
<dbReference type="PhosphoSitePlus" id="Q3UG20"/>
<dbReference type="jPOST" id="Q3UG20"/>
<dbReference type="PaxDb" id="10090-ENSMUSP00000092569"/>
<dbReference type="PeptideAtlas" id="Q3UG20"/>
<dbReference type="ProteomicsDB" id="264857">
    <molecule id="Q3UG20-1"/>
</dbReference>
<dbReference type="ProteomicsDB" id="264858">
    <molecule id="Q3UG20-2"/>
</dbReference>
<dbReference type="Antibodypedia" id="31243">
    <property type="antibodies" value="198 antibodies from 32 providers"/>
</dbReference>
<dbReference type="Ensembl" id="ENSMUST00000094962.9">
    <molecule id="Q3UG20-1"/>
    <property type="protein sequence ID" value="ENSMUSP00000092569.3"/>
    <property type="gene ID" value="ENSMUSG00000029004.16"/>
</dbReference>
<dbReference type="Ensembl" id="ENSMUST00000115128.8">
    <molecule id="Q3UG20-1"/>
    <property type="protein sequence ID" value="ENSMUSP00000110781.2"/>
    <property type="gene ID" value="ENSMUSG00000029004.16"/>
</dbReference>
<dbReference type="GeneID" id="69188"/>
<dbReference type="KEGG" id="mmu:69188"/>
<dbReference type="UCSC" id="uc008wqa.2">
    <molecule id="Q3UG20-1"/>
    <property type="organism name" value="mouse"/>
</dbReference>
<dbReference type="AGR" id="MGI:1924825"/>
<dbReference type="CTD" id="55904"/>
<dbReference type="MGI" id="MGI:1924825">
    <property type="gene designation" value="Kmt2e"/>
</dbReference>
<dbReference type="VEuPathDB" id="HostDB:ENSMUSG00000029004"/>
<dbReference type="eggNOG" id="KOG1844">
    <property type="taxonomic scope" value="Eukaryota"/>
</dbReference>
<dbReference type="GeneTree" id="ENSGT00940000157862"/>
<dbReference type="HOGENOM" id="CLU_002373_2_1_1"/>
<dbReference type="InParanoid" id="Q3UG20"/>
<dbReference type="OMA" id="GYFFKPY"/>
<dbReference type="OrthoDB" id="1928087at2759"/>
<dbReference type="PhylomeDB" id="Q3UG20"/>
<dbReference type="TreeFam" id="TF106417"/>
<dbReference type="BioGRID-ORCS" id="69188">
    <property type="hits" value="7 hits in 83 CRISPR screens"/>
</dbReference>
<dbReference type="ChiTaRS" id="Kmt2e">
    <property type="organism name" value="mouse"/>
</dbReference>
<dbReference type="PRO" id="PR:Q3UG20"/>
<dbReference type="Proteomes" id="UP000000589">
    <property type="component" value="Chromosome 5"/>
</dbReference>
<dbReference type="RNAct" id="Q3UG20">
    <property type="molecule type" value="protein"/>
</dbReference>
<dbReference type="Bgee" id="ENSMUSG00000029004">
    <property type="expression patterns" value="Expressed in rostral migratory stream and 268 other cell types or tissues"/>
</dbReference>
<dbReference type="ExpressionAtlas" id="Q3UG20">
    <property type="expression patterns" value="baseline and differential"/>
</dbReference>
<dbReference type="GO" id="GO:0005813">
    <property type="term" value="C:centrosome"/>
    <property type="evidence" value="ECO:0007669"/>
    <property type="project" value="UniProtKB-SubCell"/>
</dbReference>
<dbReference type="GO" id="GO:0005737">
    <property type="term" value="C:cytoplasm"/>
    <property type="evidence" value="ECO:0007669"/>
    <property type="project" value="UniProtKB-KW"/>
</dbReference>
<dbReference type="GO" id="GO:0000791">
    <property type="term" value="C:euchromatin"/>
    <property type="evidence" value="ECO:0007669"/>
    <property type="project" value="Ensembl"/>
</dbReference>
<dbReference type="GO" id="GO:0016607">
    <property type="term" value="C:nuclear speck"/>
    <property type="evidence" value="ECO:0007669"/>
    <property type="project" value="UniProtKB-SubCell"/>
</dbReference>
<dbReference type="GO" id="GO:0032991">
    <property type="term" value="C:protein-containing complex"/>
    <property type="evidence" value="ECO:0007669"/>
    <property type="project" value="Ensembl"/>
</dbReference>
<dbReference type="GO" id="GO:0019899">
    <property type="term" value="F:enzyme binding"/>
    <property type="evidence" value="ECO:0007669"/>
    <property type="project" value="Ensembl"/>
</dbReference>
<dbReference type="GO" id="GO:0042800">
    <property type="term" value="F:histone H3K4 methyltransferase activity"/>
    <property type="evidence" value="ECO:0000250"/>
    <property type="project" value="UniProtKB"/>
</dbReference>
<dbReference type="GO" id="GO:0035064">
    <property type="term" value="F:methylated histone binding"/>
    <property type="evidence" value="ECO:0007669"/>
    <property type="project" value="Ensembl"/>
</dbReference>
<dbReference type="GO" id="GO:0003713">
    <property type="term" value="F:transcription coactivator activity"/>
    <property type="evidence" value="ECO:0000250"/>
    <property type="project" value="UniProtKB"/>
</dbReference>
<dbReference type="GO" id="GO:0008270">
    <property type="term" value="F:zinc ion binding"/>
    <property type="evidence" value="ECO:0007669"/>
    <property type="project" value="UniProtKB-KW"/>
</dbReference>
<dbReference type="GO" id="GO:0040029">
    <property type="term" value="P:epigenetic regulation of gene expression"/>
    <property type="evidence" value="ECO:0000315"/>
    <property type="project" value="UniProtKB"/>
</dbReference>
<dbReference type="GO" id="GO:0030218">
    <property type="term" value="P:erythrocyte differentiation"/>
    <property type="evidence" value="ECO:0000315"/>
    <property type="project" value="UniProtKB"/>
</dbReference>
<dbReference type="GO" id="GO:0042119">
    <property type="term" value="P:neutrophil activation"/>
    <property type="evidence" value="ECO:0000315"/>
    <property type="project" value="UniProtKB"/>
</dbReference>
<dbReference type="GO" id="GO:0002446">
    <property type="term" value="P:neutrophil mediated immunity"/>
    <property type="evidence" value="ECO:0000315"/>
    <property type="project" value="UniProtKB"/>
</dbReference>
<dbReference type="GO" id="GO:0045893">
    <property type="term" value="P:positive regulation of DNA-templated transcription"/>
    <property type="evidence" value="ECO:0000250"/>
    <property type="project" value="UniProtKB"/>
</dbReference>
<dbReference type="GO" id="GO:1900087">
    <property type="term" value="P:positive regulation of G1/S transition of mitotic cell cycle"/>
    <property type="evidence" value="ECO:0007669"/>
    <property type="project" value="Ensembl"/>
</dbReference>
<dbReference type="GO" id="GO:0048384">
    <property type="term" value="P:retinoic acid receptor signaling pathway"/>
    <property type="evidence" value="ECO:0000250"/>
    <property type="project" value="UniProtKB"/>
</dbReference>
<dbReference type="CDD" id="cd15550">
    <property type="entry name" value="PHD_MLL5"/>
    <property type="match status" value="1"/>
</dbReference>
<dbReference type="CDD" id="cd19182">
    <property type="entry name" value="SET_KMT2E"/>
    <property type="match status" value="1"/>
</dbReference>
<dbReference type="FunFam" id="3.30.40.10:FF:000150">
    <property type="entry name" value="Inactive histone-lysine N-methyltransferase 2E"/>
    <property type="match status" value="1"/>
</dbReference>
<dbReference type="FunFam" id="2.170.270.10:FF:000009">
    <property type="entry name" value="SET domain-containing protein 5"/>
    <property type="match status" value="1"/>
</dbReference>
<dbReference type="Gene3D" id="2.170.270.10">
    <property type="entry name" value="SET domain"/>
    <property type="match status" value="1"/>
</dbReference>
<dbReference type="Gene3D" id="3.30.40.10">
    <property type="entry name" value="Zinc/RING finger domain, C3HC4 (zinc finger)"/>
    <property type="match status" value="1"/>
</dbReference>
<dbReference type="InterPro" id="IPR044434">
    <property type="entry name" value="KMT2E_SET"/>
</dbReference>
<dbReference type="InterPro" id="IPR001214">
    <property type="entry name" value="SET_dom"/>
</dbReference>
<dbReference type="InterPro" id="IPR046341">
    <property type="entry name" value="SET_dom_sf"/>
</dbReference>
<dbReference type="InterPro" id="IPR019786">
    <property type="entry name" value="Zinc_finger_PHD-type_CS"/>
</dbReference>
<dbReference type="InterPro" id="IPR011011">
    <property type="entry name" value="Znf_FYVE_PHD"/>
</dbReference>
<dbReference type="InterPro" id="IPR001965">
    <property type="entry name" value="Znf_PHD"/>
</dbReference>
<dbReference type="InterPro" id="IPR019787">
    <property type="entry name" value="Znf_PHD-finger"/>
</dbReference>
<dbReference type="InterPro" id="IPR013083">
    <property type="entry name" value="Znf_RING/FYVE/PHD"/>
</dbReference>
<dbReference type="PANTHER" id="PTHR46462:SF2">
    <property type="entry name" value="INACTIVE HISTONE-LYSINE N-METHYLTRANSFERASE 2E"/>
    <property type="match status" value="1"/>
</dbReference>
<dbReference type="PANTHER" id="PTHR46462">
    <property type="entry name" value="UPSET, ISOFORM A"/>
    <property type="match status" value="1"/>
</dbReference>
<dbReference type="Pfam" id="PF20826">
    <property type="entry name" value="PHD_5"/>
    <property type="match status" value="1"/>
</dbReference>
<dbReference type="Pfam" id="PF00856">
    <property type="entry name" value="SET"/>
    <property type="match status" value="1"/>
</dbReference>
<dbReference type="SMART" id="SM00249">
    <property type="entry name" value="PHD"/>
    <property type="match status" value="1"/>
</dbReference>
<dbReference type="SMART" id="SM00317">
    <property type="entry name" value="SET"/>
    <property type="match status" value="1"/>
</dbReference>
<dbReference type="SUPFAM" id="SSF57903">
    <property type="entry name" value="FYVE/PHD zinc finger"/>
    <property type="match status" value="1"/>
</dbReference>
<dbReference type="SUPFAM" id="SSF82199">
    <property type="entry name" value="SET domain"/>
    <property type="match status" value="1"/>
</dbReference>
<dbReference type="PROSITE" id="PS50280">
    <property type="entry name" value="SET"/>
    <property type="match status" value="1"/>
</dbReference>
<dbReference type="PROSITE" id="PS01359">
    <property type="entry name" value="ZF_PHD_1"/>
    <property type="match status" value="1"/>
</dbReference>
<dbReference type="PROSITE" id="PS50016">
    <property type="entry name" value="ZF_PHD_2"/>
    <property type="match status" value="1"/>
</dbReference>
<protein>
    <recommendedName>
        <fullName evidence="15">Inactive histone-lysine N-methyltransferase 2E</fullName>
        <shortName evidence="15">Inactive lysine N-methyltransferase 2E</shortName>
    </recommendedName>
    <alternativeName>
        <fullName>Myeloid/lymphoid or mixed-lineage leukemia protein 5 homolog</fullName>
    </alternativeName>
</protein>
<sequence length="1868" mass="204543">MSIAIPLGVDTTETSYLEMAAGSEPESVEASPVVVEKSNSFPHQLYTSSSHHSHSYIGLPYADHNYGARPPPTPPASPPPSGLISKNEVGIFTTPNFDETSSATTISTSEDGSYGTDVTRCICGFTHDDGYMICCDKCSVWQHIDCMGIDRQHIPDTYLCERCQPRSLDKERAVLLQRRKRENMSDGDTSATESGDEVPVELYTAFQHTPTSITLTASRVPKVTDKRRKKSGEKEQNFSKCKKAFREGSRKSSRVKGSAPEIDPSSDSSNFVWETKIKAWMDRYEEANNNQYSEGVQREAQRLAQRLGSGNDSKDMNKSELSTNNSLFRPPVESHIQKNKKILKSAKDLPPDALIIEYRGKFMLREQFEANGYFFKRPYPFVLFYSKFHGLEMCVDARTFGNEARFIRRSCTPNAEVRHEIEEGTIHLYIYSIQSIPKGTEITIAFDFDYGNCKYKVDCACLKENPECPVLKRSSESTENINSGYETRRKKGKKEKDTSKEKDIQNQNMTLDCEGTNNKIRSPETKQRKLSPLRLSVSNNQEPDFIDDMEEKTPISNEVEMESEEQIAERKRKMTREERKMEAILQAFARLEKREKRREQALERISTAKTEVKPECKESQVIADAEVVQEQVKEETAIKPAAAKVNRTKQRKSFSRSRTHIGQQRRRHRTVSMCSDIPPSSPDIEVLSQQNEIENTVLAIEPETETAVAEIIPEAEVPALNKCPTKYPKTKKHLVNEWLSEKNEKTGKPSDSLSERPLRITTDPEVLATQLNSLPGLTYSPHVYSTPKHYIRFTSPFLSEKKRRKETTENISGSCKKRWLKQALEEENSTILHRYHSPCQERSRSPTVNGENKSPLLLSDSCSLPDLTTPLKKRRLYQLLDTAYSESSTPTPSPYATPTHTDITPTDPAFATPPRIKSDDETYRNGYKPIYSPVTPVTPGTPGNTMHFENISSPESSPEIKRCTYNQEGYDRPSNMLTLGPFRNSNLTELGLQEIKTIGYTSPRSRTEVNRPCPGEKESVSDLQLGLDAVEPAALQKSMETPAHDRTEPSNQLDSTHSGRGTMYSSWVKSPDRTGVNFSVNSNLRDLTPSHQLETGGGFRVSESKCLIQQDDTRGMFLGAAVFCTSEDGLASGFGRTVNDNLIDGSCTPQNPPQKKKVSLLEYRKRQREARKSGSKPENFALISVSPHPSGSLSSSGDGCVHSSENGEQAENQASLPLPPPAAAAAATAAAAYSASSEEGSSNCPVKDANSSEKKDPEVQWTASTSVEQVRERSYQRALLLSDHRKDKDSGGESPCVSCSPSHVQSPPSSHSNHIPQVHAQSLAPSLSELMADPDAEGTEATSTSECPSPDTSQSPSKTSKPGSPGPINPAQSHGKILTKPDSHWEATATVSEADNSVHQNPEPQHRQLSSNTPALSQNHAPQAHALSANDQLPQKLPSAPTKLHCPPSPHTENPPKSSTPHTPVQHGYLSPKPPSQHLGSPFRPHHSQSPQVGTPQRETQRNFYAAAQNLQANPQQATSGALFTQTPSGQSSATYSQFNQQSLNSTAPPPPPPPPPSSYYQNQQPSANFQNYNQLKGSLSQQTVFTSGPNQALPGSTSQQSVPGHHVTPGHFLPSQNPTIHHQPAAAAVVPPPPPPPPAPGPHLIQQPSSHQQHSVAHGVGPVHAVTPGSHIHSQTAGHHLPPPPPPPGPAPHHHPPPHPTTGLQSLQAQHQHVVNSAPPPPPPPPPPPPASVLVSGHHSASGQALHHPPHQGPPLFPASAHPAVPPYPSQATHHTTLGPGPQHQPSGTGPHCPLPVAGPHLQPQGPNSIPTPTASGFCPHPHPGSVALPHGVQGPQQASPVPAQIPIHRAQVPPTFQNNYHGSGWH</sequence>
<name>KMT2E_MOUSE</name>
<comment type="function">
    <text evidence="1 9 10 11 12">Associates with chromatin regions downstream of transcriptional start sites of active genes and thus regulates gene transcription (By similarity). Chromatin interaction is mediated via the binding to tri-methylated histone H3 at 'Lys-4' (H3K4me3) (By similarity). Key regulator of hematopoiesis involved in terminal myeloid differentiation and in the regulation of hematopoietic stem cell (HSCs) self-renewal by a mechanism that involves DNA methylation (PubMed:18818388, PubMed:18854576, PubMed:18952892). Also acts as an important cell cycle regulator, participating in cell cycle regulatory network machinery at multiple cell cycle stages including G1/S transition, S phase progression and mitotic entry (PubMed:19264965). Recruited to E2F1 responsive promoters by HCFC1 where it stimulates tri-methylation of histone H3 at 'Lys-4' and transcriptional activation and thereby facilitates G1 to S phase transition (By similarity). During myoblast differentiation, required to suppress inappropriate expression of S-phase-promoting genes and maintain expression of determination genes in quiescent cells (PubMed:19264965).</text>
</comment>
<comment type="subunit">
    <text evidence="1">Component of a complex composed of KMT2E, OGT and USP7; the complex stabilizes KMT2E, preventing KMT2E ubiquitination and proteasomal-mediated degradation. Interacts (via N-terminus) with OGT (via TRP repeats). Interacts with deubiquitinating enzyme USP7 (via MATH domain). Interacts (via HBM motif) with HCFC1 (via Kelch domain). Interacts with E2F1; the interaction is probably indirect and is mediated via HCFC1.</text>
</comment>
<comment type="subcellular location">
    <subcellularLocation>
        <location evidence="1">Chromosome</location>
    </subcellularLocation>
    <subcellularLocation>
        <location evidence="1">Cytoplasm</location>
        <location evidence="1">Cytoskeleton</location>
        <location evidence="1">Microtubule organizing center</location>
        <location evidence="1">Centrosome</location>
    </subcellularLocation>
    <subcellularLocation>
        <location evidence="1">Nucleus speckle</location>
    </subcellularLocation>
    <text evidence="1">Absent from the nucleolus. Localizes to chromosome during interphase and to centrosomes during mitosis. Dissociation from mitotic chromosome is likely due to histone H3 phosphorylation on 'Thr-3' and 'Thr-6'.</text>
</comment>
<comment type="alternative products">
    <event type="alternative splicing"/>
    <isoform>
        <id>Q3UG20-1</id>
        <name evidence="6 7">1</name>
        <sequence type="displayed"/>
    </isoform>
    <isoform>
        <id>Q3UG20-2</id>
        <name evidence="7">2</name>
        <sequence type="described" ref="VSP_052813"/>
    </isoform>
</comment>
<comment type="induction">
    <text evidence="8">Up-regulated in reversibly arrested C2C12 myoblasts.</text>
</comment>
<comment type="domain">
    <text evidence="1">The PHD-type domain binds specifically histone H3 tri-methylated at 'Lys-4' (H3K4me3), thus promoting binding to chromatin.</text>
</comment>
<comment type="domain">
    <text evidence="1">The SET domain does not bind the methyl group donor S-adenosyl-L-methionine and histone 3 H3K4 peptide as a large loop prevents the docking of the 'Lys-4' side chain.</text>
</comment>
<comment type="domain">
    <text evidence="1">The C-terminus domain is responsible for the localization to the centrosome during mitosis.</text>
</comment>
<comment type="PTM">
    <text evidence="1">Ubiquitinated. Deubiquitinated by USP7.</text>
</comment>
<comment type="PTM">
    <text evidence="1">O-glycosylated at Ser-435 and Thr-440 in the SET domain by OGT which probably prevents KMT2E proteasomal-mediated degradation.</text>
</comment>
<comment type="disruption phenotype">
    <text evidence="9 10 11">Defects in immunity and hematopoiesis. Adult homozygous mice are obtained at reduced frequency because of postnatal lethality. Surviving animals display a variety of abnormalities, including male infertility, retarded growth and defects in multiple hematopoietic lineages. They also show increased susceptibility to spontaneous eye infections associated with a cell-autonomous impairment of neutrophil function. They exhibit a mild impairment of erythropoiesis and hematopoietic stem cells (HSCs) have impaired competitive repopulating capacity both under normal conditions and when subjected to self-renewal stimulation by NUP98-HOXA10. Homozygous HSCs show a dramatic sensitivity to DNA demethylation-induced differentiation (5-azadeoxycytidine).</text>
</comment>
<comment type="similarity">
    <text evidence="4">Belongs to the class V-like SAM-binding methyltransferase superfamily. Histone-lysine methyltransferase family. TRX/MLL subfamily.</text>
</comment>
<comment type="caution">
    <text evidence="1 11">Does not exhibit histone methyltransferase towards histone H3 in vitro (PubMed:18952892). The isolated catalytic SET domain lacks binding activity towards cofactor S-adenosyl-L-methionine; instead of the highly conserved XGXG, Y and NH motifs, KMT2E displays NKKI (Asn-339-Ile-342), F (Phe-381) and RR (Arg-408-Arg-409) motifs. Also lacks binding activity towards histone H3 due to a poor conservation of the key residues involved in the binding and the presence of large loop which prevents the docking of the H3 'Lys-4' side chain.</text>
</comment>
<comment type="sequence caution" evidence="15">
    <conflict type="miscellaneous discrepancy">
        <sequence resource="EMBL-CDS" id="AAH36286"/>
    </conflict>
    <text>Contaminating sequence. Potential poly-A sequence starting in position 486.</text>
</comment>
<comment type="sequence caution" evidence="15">
    <conflict type="miscellaneous discrepancy">
        <sequence resource="EMBL-CDS" id="AAH64079"/>
    </conflict>
    <text>Contaminating sequence. Potential poly-A sequence starting in position 803.</text>
</comment>
<comment type="sequence caution" evidence="15">
    <conflict type="miscellaneous discrepancy">
        <sequence resource="EMBL-CDS" id="AAH89356"/>
    </conflict>
    <text>Contaminating sequence. Potential poly-A sequence starting in position 495.</text>
</comment>
<comment type="sequence caution" evidence="15">
    <conflict type="miscellaneous discrepancy">
        <sequence resource="EMBL-CDS" id="AAI03802"/>
    </conflict>
    <text>Contaminating sequence. Potential poly-A sequence starting in position 492.</text>
</comment>
<comment type="sequence caution" evidence="15">
    <conflict type="erroneous initiation">
        <sequence resource="EMBL-CDS" id="BAB25186"/>
    </conflict>
</comment>
<comment type="sequence caution" evidence="15">
    <conflict type="erroneous initiation">
        <sequence resource="EMBL-CDS" id="BAC28936"/>
    </conflict>
</comment>
<comment type="sequence caution" evidence="15">
    <conflict type="frameshift">
        <sequence resource="EMBL-CDS" id="BAE28389"/>
    </conflict>
</comment>
<keyword id="KW-0025">Alternative splicing</keyword>
<keyword id="KW-0131">Cell cycle</keyword>
<keyword id="KW-0156">Chromatin regulator</keyword>
<keyword id="KW-0158">Chromosome</keyword>
<keyword id="KW-0175">Coiled coil</keyword>
<keyword id="KW-0963">Cytoplasm</keyword>
<keyword id="KW-0206">Cytoskeleton</keyword>
<keyword id="KW-0325">Glycoprotein</keyword>
<keyword id="KW-0338">Growth arrest</keyword>
<keyword id="KW-0479">Metal-binding</keyword>
<keyword id="KW-0539">Nucleus</keyword>
<keyword id="KW-0597">Phosphoprotein</keyword>
<keyword id="KW-1185">Reference proteome</keyword>
<keyword id="KW-0804">Transcription</keyword>
<keyword id="KW-0805">Transcription regulation</keyword>
<keyword id="KW-0832">Ubl conjugation</keyword>
<keyword id="KW-0862">Zinc</keyword>
<keyword id="KW-0863">Zinc-finger</keyword>
<evidence type="ECO:0000250" key="1">
    <source>
        <dbReference type="UniProtKB" id="Q8IZD2"/>
    </source>
</evidence>
<evidence type="ECO:0000255" key="2"/>
<evidence type="ECO:0000255" key="3">
    <source>
        <dbReference type="PROSITE-ProRule" id="PRU00146"/>
    </source>
</evidence>
<evidence type="ECO:0000255" key="4">
    <source>
        <dbReference type="PROSITE-ProRule" id="PRU00190"/>
    </source>
</evidence>
<evidence type="ECO:0000256" key="5">
    <source>
        <dbReference type="SAM" id="MobiDB-lite"/>
    </source>
</evidence>
<evidence type="ECO:0000269" key="6">
    <source>
    </source>
</evidence>
<evidence type="ECO:0000269" key="7">
    <source>
    </source>
</evidence>
<evidence type="ECO:0000269" key="8">
    <source>
    </source>
</evidence>
<evidence type="ECO:0000269" key="9">
    <source>
    </source>
</evidence>
<evidence type="ECO:0000269" key="10">
    <source>
    </source>
</evidence>
<evidence type="ECO:0000269" key="11">
    <source>
    </source>
</evidence>
<evidence type="ECO:0000269" key="12">
    <source>
    </source>
</evidence>
<evidence type="ECO:0000303" key="13">
    <source>
    </source>
</evidence>
<evidence type="ECO:0000303" key="14">
    <source>
    </source>
</evidence>
<evidence type="ECO:0000305" key="15"/>
<evidence type="ECO:0000312" key="16">
    <source>
        <dbReference type="EMBL" id="AAH36286.1"/>
    </source>
</evidence>
<evidence type="ECO:0000312" key="17">
    <source>
        <dbReference type="EMBL" id="AAH64079.1"/>
    </source>
</evidence>
<evidence type="ECO:0000312" key="18">
    <source>
        <dbReference type="EMBL" id="AAH89356.1"/>
    </source>
</evidence>
<evidence type="ECO:0000312" key="19">
    <source>
        <dbReference type="EMBL" id="BAB25186.1"/>
    </source>
</evidence>
<evidence type="ECO:0000312" key="20">
    <source>
        <dbReference type="EMBL" id="BAC28936.2"/>
    </source>
</evidence>
<evidence type="ECO:0000312" key="21">
    <source>
        <dbReference type="EMBL" id="BAE28389.1"/>
    </source>
</evidence>
<evidence type="ECO:0000312" key="22">
    <source>
        <dbReference type="EMBL" id="BAE35839.1"/>
    </source>
</evidence>
<evidence type="ECO:0000312" key="23">
    <source>
        <dbReference type="EMBL" id="BAE43262.1"/>
    </source>
</evidence>
<evidence type="ECO:0007744" key="24">
    <source>
    </source>
</evidence>
<accession>Q3UG20</accession>
<accession>Q3SYI5</accession>
<accession>Q3TUY2</accession>
<accession>Q3V410</accession>
<accession>Q5FWI1</accession>
<accession>Q6P3B3</accession>
<accession>Q8BS65</accession>
<accession>Q8CFX7</accession>
<accession>Q9CVK6</accession>
<organism>
    <name type="scientific">Mus musculus</name>
    <name type="common">Mouse</name>
    <dbReference type="NCBI Taxonomy" id="10090"/>
    <lineage>
        <taxon>Eukaryota</taxon>
        <taxon>Metazoa</taxon>
        <taxon>Chordata</taxon>
        <taxon>Craniata</taxon>
        <taxon>Vertebrata</taxon>
        <taxon>Euteleostomi</taxon>
        <taxon>Mammalia</taxon>
        <taxon>Eutheria</taxon>
        <taxon>Euarchontoglires</taxon>
        <taxon>Glires</taxon>
        <taxon>Rodentia</taxon>
        <taxon>Myomorpha</taxon>
        <taxon>Muroidea</taxon>
        <taxon>Muridae</taxon>
        <taxon>Murinae</taxon>
        <taxon>Mus</taxon>
        <taxon>Mus</taxon>
    </lineage>
</organism>
<reference key="1">
    <citation type="journal article" date="2009" name="PLoS Biol.">
        <title>Lineage-specific biology revealed by a finished genome assembly of the mouse.</title>
        <authorList>
            <person name="Church D.M."/>
            <person name="Goodstadt L."/>
            <person name="Hillier L.W."/>
            <person name="Zody M.C."/>
            <person name="Goldstein S."/>
            <person name="She X."/>
            <person name="Bult C.J."/>
            <person name="Agarwala R."/>
            <person name="Cherry J.L."/>
            <person name="DiCuccio M."/>
            <person name="Hlavina W."/>
            <person name="Kapustin Y."/>
            <person name="Meric P."/>
            <person name="Maglott D."/>
            <person name="Birtle Z."/>
            <person name="Marques A.C."/>
            <person name="Graves T."/>
            <person name="Zhou S."/>
            <person name="Teague B."/>
            <person name="Potamousis K."/>
            <person name="Churas C."/>
            <person name="Place M."/>
            <person name="Herschleb J."/>
            <person name="Runnheim R."/>
            <person name="Forrest D."/>
            <person name="Amos-Landgraf J."/>
            <person name="Schwartz D.C."/>
            <person name="Cheng Z."/>
            <person name="Lindblad-Toh K."/>
            <person name="Eichler E.E."/>
            <person name="Ponting C.P."/>
        </authorList>
    </citation>
    <scope>NUCLEOTIDE SEQUENCE [LARGE SCALE GENOMIC DNA]</scope>
    <source>
        <strain>C57BL/6J</strain>
    </source>
</reference>
<reference evidence="15 21" key="2">
    <citation type="journal article" date="2005" name="Science">
        <title>The transcriptional landscape of the mammalian genome.</title>
        <authorList>
            <person name="Carninci P."/>
            <person name="Kasukawa T."/>
            <person name="Katayama S."/>
            <person name="Gough J."/>
            <person name="Frith M.C."/>
            <person name="Maeda N."/>
            <person name="Oyama R."/>
            <person name="Ravasi T."/>
            <person name="Lenhard B."/>
            <person name="Wells C."/>
            <person name="Kodzius R."/>
            <person name="Shimokawa K."/>
            <person name="Bajic V.B."/>
            <person name="Brenner S.E."/>
            <person name="Batalov S."/>
            <person name="Forrest A.R."/>
            <person name="Zavolan M."/>
            <person name="Davis M.J."/>
            <person name="Wilming L.G."/>
            <person name="Aidinis V."/>
            <person name="Allen J.E."/>
            <person name="Ambesi-Impiombato A."/>
            <person name="Apweiler R."/>
            <person name="Aturaliya R.N."/>
            <person name="Bailey T.L."/>
            <person name="Bansal M."/>
            <person name="Baxter L."/>
            <person name="Beisel K.W."/>
            <person name="Bersano T."/>
            <person name="Bono H."/>
            <person name="Chalk A.M."/>
            <person name="Chiu K.P."/>
            <person name="Choudhary V."/>
            <person name="Christoffels A."/>
            <person name="Clutterbuck D.R."/>
            <person name="Crowe M.L."/>
            <person name="Dalla E."/>
            <person name="Dalrymple B.P."/>
            <person name="de Bono B."/>
            <person name="Della Gatta G."/>
            <person name="di Bernardo D."/>
            <person name="Down T."/>
            <person name="Engstrom P."/>
            <person name="Fagiolini M."/>
            <person name="Faulkner G."/>
            <person name="Fletcher C.F."/>
            <person name="Fukushima T."/>
            <person name="Furuno M."/>
            <person name="Futaki S."/>
            <person name="Gariboldi M."/>
            <person name="Georgii-Hemming P."/>
            <person name="Gingeras T.R."/>
            <person name="Gojobori T."/>
            <person name="Green R.E."/>
            <person name="Gustincich S."/>
            <person name="Harbers M."/>
            <person name="Hayashi Y."/>
            <person name="Hensch T.K."/>
            <person name="Hirokawa N."/>
            <person name="Hill D."/>
            <person name="Huminiecki L."/>
            <person name="Iacono M."/>
            <person name="Ikeo K."/>
            <person name="Iwama A."/>
            <person name="Ishikawa T."/>
            <person name="Jakt M."/>
            <person name="Kanapin A."/>
            <person name="Katoh M."/>
            <person name="Kawasawa Y."/>
            <person name="Kelso J."/>
            <person name="Kitamura H."/>
            <person name="Kitano H."/>
            <person name="Kollias G."/>
            <person name="Krishnan S.P."/>
            <person name="Kruger A."/>
            <person name="Kummerfeld S.K."/>
            <person name="Kurochkin I.V."/>
            <person name="Lareau L.F."/>
            <person name="Lazarevic D."/>
            <person name="Lipovich L."/>
            <person name="Liu J."/>
            <person name="Liuni S."/>
            <person name="McWilliam S."/>
            <person name="Madan Babu M."/>
            <person name="Madera M."/>
            <person name="Marchionni L."/>
            <person name="Matsuda H."/>
            <person name="Matsuzawa S."/>
            <person name="Miki H."/>
            <person name="Mignone F."/>
            <person name="Miyake S."/>
            <person name="Morris K."/>
            <person name="Mottagui-Tabar S."/>
            <person name="Mulder N."/>
            <person name="Nakano N."/>
            <person name="Nakauchi H."/>
            <person name="Ng P."/>
            <person name="Nilsson R."/>
            <person name="Nishiguchi S."/>
            <person name="Nishikawa S."/>
            <person name="Nori F."/>
            <person name="Ohara O."/>
            <person name="Okazaki Y."/>
            <person name="Orlando V."/>
            <person name="Pang K.C."/>
            <person name="Pavan W.J."/>
            <person name="Pavesi G."/>
            <person name="Pesole G."/>
            <person name="Petrovsky N."/>
            <person name="Piazza S."/>
            <person name="Reed J."/>
            <person name="Reid J.F."/>
            <person name="Ring B.Z."/>
            <person name="Ringwald M."/>
            <person name="Rost B."/>
            <person name="Ruan Y."/>
            <person name="Salzberg S.L."/>
            <person name="Sandelin A."/>
            <person name="Schneider C."/>
            <person name="Schoenbach C."/>
            <person name="Sekiguchi K."/>
            <person name="Semple C.A."/>
            <person name="Seno S."/>
            <person name="Sessa L."/>
            <person name="Sheng Y."/>
            <person name="Shibata Y."/>
            <person name="Shimada H."/>
            <person name="Shimada K."/>
            <person name="Silva D."/>
            <person name="Sinclair B."/>
            <person name="Sperling S."/>
            <person name="Stupka E."/>
            <person name="Sugiura K."/>
            <person name="Sultana R."/>
            <person name="Takenaka Y."/>
            <person name="Taki K."/>
            <person name="Tammoja K."/>
            <person name="Tan S.L."/>
            <person name="Tang S."/>
            <person name="Taylor M.S."/>
            <person name="Tegner J."/>
            <person name="Teichmann S.A."/>
            <person name="Ueda H.R."/>
            <person name="van Nimwegen E."/>
            <person name="Verardo R."/>
            <person name="Wei C.L."/>
            <person name="Yagi K."/>
            <person name="Yamanishi H."/>
            <person name="Zabarovsky E."/>
            <person name="Zhu S."/>
            <person name="Zimmer A."/>
            <person name="Hide W."/>
            <person name="Bult C."/>
            <person name="Grimmond S.M."/>
            <person name="Teasdale R.D."/>
            <person name="Liu E.T."/>
            <person name="Brusic V."/>
            <person name="Quackenbush J."/>
            <person name="Wahlestedt C."/>
            <person name="Mattick J.S."/>
            <person name="Hume D.A."/>
            <person name="Kai C."/>
            <person name="Sasaki D."/>
            <person name="Tomaru Y."/>
            <person name="Fukuda S."/>
            <person name="Kanamori-Katayama M."/>
            <person name="Suzuki M."/>
            <person name="Aoki J."/>
            <person name="Arakawa T."/>
            <person name="Iida J."/>
            <person name="Imamura K."/>
            <person name="Itoh M."/>
            <person name="Kato T."/>
            <person name="Kawaji H."/>
            <person name="Kawagashira N."/>
            <person name="Kawashima T."/>
            <person name="Kojima M."/>
            <person name="Kondo S."/>
            <person name="Konno H."/>
            <person name="Nakano K."/>
            <person name="Ninomiya N."/>
            <person name="Nishio T."/>
            <person name="Okada M."/>
            <person name="Plessy C."/>
            <person name="Shibata K."/>
            <person name="Shiraki T."/>
            <person name="Suzuki S."/>
            <person name="Tagami M."/>
            <person name="Waki K."/>
            <person name="Watahiki A."/>
            <person name="Okamura-Oho Y."/>
            <person name="Suzuki H."/>
            <person name="Kawai J."/>
            <person name="Hayashizaki Y."/>
        </authorList>
    </citation>
    <scope>NUCLEOTIDE SEQUENCE [LARGE SCALE MRNA] OF 1-1153 (ISOFORM 1)</scope>
    <source>
        <strain evidence="21">C57BL/6J</strain>
        <tissue evidence="20">Embryo</tissue>
        <tissue evidence="23">Embryonic eye</tissue>
        <tissue evidence="21">Melanoma</tissue>
        <tissue evidence="19">Pancreas</tissue>
        <tissue evidence="22">Tongue</tissue>
    </source>
</reference>
<reference evidence="15 18" key="3">
    <citation type="journal article" date="2004" name="Genome Res.">
        <title>The status, quality, and expansion of the NIH full-length cDNA project: the Mammalian Gene Collection (MGC).</title>
        <authorList>
            <consortium name="The MGC Project Team"/>
        </authorList>
    </citation>
    <scope>NUCLEOTIDE SEQUENCE [LARGE SCALE MRNA] OF 1-802 (ISOFORM 2)</scope>
    <scope>NUCLEOTIDE SEQUENCE [LARGE SCALE MRNA] OF 1-494 (ISOFORM 1)</scope>
    <source>
        <strain evidence="17 18">C57BL/6J</strain>
        <strain evidence="16">FVB/N</strain>
        <tissue evidence="18">Eye</tissue>
        <tissue evidence="17">Mammary gland</tissue>
        <tissue evidence="16">Mammary tumor</tissue>
    </source>
</reference>
<reference evidence="15" key="4">
    <citation type="journal article" date="2008" name="J. Biosci.">
        <title>A gene-trap strategy identifies quiescence-induced genes in synchronized myoblasts.</title>
        <authorList>
            <person name="Sambasivan R."/>
            <person name="Pavlath G.K."/>
            <person name="Dhawan J."/>
        </authorList>
    </citation>
    <scope>INDUCTION</scope>
</reference>
<reference key="5">
    <citation type="journal article" date="2009" name="Blood">
        <title>Loss of MLL5 results in pleiotropic hematopoietic defects, reduced neutrophil immune function, and extreme sensitivity to DNA demethylation.</title>
        <authorList>
            <person name="Heuser M."/>
            <person name="Yap D.B."/>
            <person name="Leung M."/>
            <person name="de Algara T.R."/>
            <person name="Tafech A."/>
            <person name="McKinney S."/>
            <person name="Dixon J."/>
            <person name="Thresher R."/>
            <person name="Colledge B."/>
            <person name="Carlton M."/>
            <person name="Humphries R.K."/>
            <person name="Aparicio S.A."/>
        </authorList>
    </citation>
    <scope>FUNCTION</scope>
    <scope>DISRUPTION PHENOTYPE</scope>
</reference>
<reference key="6">
    <citation type="journal article" date="2009" name="Blood">
        <title>Impaired function of primitive hematopoietic cells in mice lacking the Mixed-Lineage-Leukemia homolog MLL5.</title>
        <authorList>
            <person name="Madan V."/>
            <person name="Madan B."/>
            <person name="Brykczynska U."/>
            <person name="Zilbermann F."/>
            <person name="Hogeveen K."/>
            <person name="Doehner K."/>
            <person name="Doehner H."/>
            <person name="Weber O."/>
            <person name="Blum C."/>
            <person name="Rodewald H.-R."/>
            <person name="Sassone-Corsi P."/>
            <person name="Peters A.H.F.M."/>
            <person name="Fehling H.J."/>
        </authorList>
    </citation>
    <scope>FUNCTION</scope>
    <scope>LACK OF CATALYTIC ACTIVITY</scope>
    <scope>DISRUPTION PHENOTYPE</scope>
</reference>
<reference key="7">
    <citation type="journal article" date="2009" name="Blood">
        <title>MLL5 contributes to hematopoietic stem cell fitness and homeostasis.</title>
        <authorList>
            <person name="Zhang Y."/>
            <person name="Wong J."/>
            <person name="Klinger M."/>
            <person name="Tran M.T."/>
            <person name="Shannon K.M."/>
            <person name="Killeen N."/>
        </authorList>
    </citation>
    <scope>FUNCTION</scope>
    <scope>DISRUPTION PHENOTYPE</scope>
</reference>
<reference key="8">
    <citation type="journal article" date="2009" name="Proc. Natl. Acad. Sci. U.S.A.">
        <title>MLL5, a trithorax homolog, indirectly regulates H3K4 methylation, represses cyclin A2 expression, and promotes myogenic differentiation.</title>
        <authorList>
            <person name="Sebastian S."/>
            <person name="Sreenivas P."/>
            <person name="Sambasivan R."/>
            <person name="Cheedipudi S."/>
            <person name="Kandalla P."/>
            <person name="Pavlath G.K."/>
            <person name="Dhawan J."/>
        </authorList>
    </citation>
    <scope>FUNCTION</scope>
</reference>
<reference key="9">
    <citation type="journal article" date="2010" name="Cell">
        <title>A tissue-specific atlas of mouse protein phosphorylation and expression.</title>
        <authorList>
            <person name="Huttlin E.L."/>
            <person name="Jedrychowski M.P."/>
            <person name="Elias J.E."/>
            <person name="Goswami T."/>
            <person name="Rad R."/>
            <person name="Beausoleil S.A."/>
            <person name="Villen J."/>
            <person name="Haas W."/>
            <person name="Sowa M.E."/>
            <person name="Gygi S.P."/>
        </authorList>
    </citation>
    <scope>PHOSPHORYLATION [LARGE SCALE ANALYSIS] AT SER-845</scope>
    <scope>IDENTIFICATION BY MASS SPECTROMETRY [LARGE SCALE ANALYSIS]</scope>
    <source>
        <tissue>Kidney</tissue>
    </source>
</reference>
<gene>
    <name type="primary">Kmt2e</name>
    <name type="synonym">Mll5</name>
</gene>